<sequence>MATQSFSVAPSVQWTERDATLQTSPSVVVQGATVGKFQWGEVELPVLVTGGETGLVKKFFKPNDSTATDFLVIADFLSYSSMAWVTRVVGPLAKNSVTKGQTAITIKNKLDFETASPSASITWAGRYPGSLGNDIAINVCDSAGFPTWEFRNNFAYAPQSGEFHVVVVDKVGRITDSAGAVGQVDRISVSGTATAAGTISVAGEDIAYLDTDTPATLATKIGAALTALTDVYSSVVVKSNTVIVTHKAIGPQTVTAIVPDDKGLTATAVITTVGASGSIIEKYELMQNTQGSKKSDGANAYFKDVINDTSNWVYTFATALAAGVVELEGGVDDYNINRVAAIQVLNNAEAYDAKPVFAYCEELIEQQALIDLSTERKDTVSFVSPLRDTVVGNRGREMDDVVSWRESLVRDSSYFFMDDNWAYVYDKYNDKMRWIPACGGTAGVWARSIEIAGIYKSPAFHNRGKYNNYNRMAWSASSDERAVLYRNQINSIVTFSNEGIVLYGDKTGLTRPSAFDRINVRGLFIMAEQNIAAIAKYYLGENNDAFTRSLFSNAVRPYIRQLANMGAIYDGKVKCDEDNNTADVIAANQMVAGIWLKPEYSINWVYLDFAAVRPDMEFSEIESGGGIVAAS</sequence>
<organismHost>
    <name type="scientific">Salmonella typhi</name>
    <dbReference type="NCBI Taxonomy" id="90370"/>
</organismHost>
<reference key="1">
    <citation type="journal article" date="2010" name="J. Bacteriol.">
        <title>A conserved acetyl esterase domain targets diverse bacteriophages to the Vi capsular receptor of Salmonella enterica serovar Typhi.</title>
        <authorList>
            <person name="Pickard D."/>
            <person name="Toribio A.L."/>
            <person name="Petty N.K."/>
            <person name="van Tonder A."/>
            <person name="Yu L."/>
            <person name="Goulding D."/>
            <person name="Barrell B."/>
            <person name="Rance R."/>
            <person name="Harris D."/>
            <person name="Wetter M."/>
            <person name="Wain J."/>
            <person name="Choudhary J."/>
            <person name="Thomson N."/>
            <person name="Dougan G."/>
        </authorList>
    </citation>
    <scope>NUCLEOTIDE SEQUENCE [LARGE SCALE GENOMIC DNA]</scope>
</reference>
<accession>E1XTG9</accession>
<proteinExistence type="inferred from homology"/>
<gene>
    <name evidence="3" type="primary">tail sheath</name>
    <name evidence="3" type="ORF">Vi01_160c</name>
</gene>
<organism evidence="4">
    <name type="scientific">Salmonella phage ViI</name>
    <dbReference type="NCBI Taxonomy" id="1987993"/>
    <lineage>
        <taxon>Viruses</taxon>
        <taxon>Duplodnaviria</taxon>
        <taxon>Heunggongvirae</taxon>
        <taxon>Uroviricota</taxon>
        <taxon>Caudoviricetes</taxon>
        <taxon>Ackermannviridae</taxon>
        <taxon>Cvivirinae</taxon>
        <taxon>Kuttervirus</taxon>
    </lineage>
</organism>
<keyword id="KW-1035">Host cytoplasm</keyword>
<keyword id="KW-1185">Reference proteome</keyword>
<keyword id="KW-1242">Viral contractile tail ejection system</keyword>
<keyword id="KW-1171">Viral genome ejection through host cell envelope</keyword>
<keyword id="KW-1162">Viral penetration into host cytoplasm</keyword>
<keyword id="KW-1227">Viral tail protein</keyword>
<keyword id="KW-1229">Viral tail sheath protein</keyword>
<keyword id="KW-0946">Virion</keyword>
<keyword id="KW-1160">Virus entry into host cell</keyword>
<protein>
    <recommendedName>
        <fullName evidence="2">Tail sheath protein</fullName>
        <shortName>TSP</shortName>
    </recommendedName>
</protein>
<comment type="function">
    <text evidence="1">Polymerizes as an extended structure around the baseplate-tail tube complex. During ejection, the sheath shifts to a contracted form, thereby making the inner tail tube protrude through the host cell envelope.</text>
</comment>
<comment type="subunit">
    <text evidence="1">Homomultimer.</text>
</comment>
<comment type="subcellular location">
    <subcellularLocation>
        <location evidence="1">Virion</location>
    </subcellularLocation>
    <subcellularLocation>
        <location evidence="1">Host cytoplasm</location>
    </subcellularLocation>
    <text evidence="1">Tail.</text>
</comment>
<comment type="similarity">
    <text evidence="2">Belongs to the myoviridae tail sheath protein family.</text>
</comment>
<dbReference type="EMBL" id="FQ312032">
    <property type="protein sequence ID" value="CBW38028.1"/>
    <property type="molecule type" value="Genomic_DNA"/>
</dbReference>
<dbReference type="Proteomes" id="UP000000339">
    <property type="component" value="Segment"/>
</dbReference>
<dbReference type="GO" id="GO:0030430">
    <property type="term" value="C:host cell cytoplasm"/>
    <property type="evidence" value="ECO:0007669"/>
    <property type="project" value="UniProtKB-SubCell"/>
</dbReference>
<dbReference type="GO" id="GO:0098027">
    <property type="term" value="C:virus tail, sheath"/>
    <property type="evidence" value="ECO:0007669"/>
    <property type="project" value="UniProtKB-KW"/>
</dbReference>
<dbReference type="GO" id="GO:0099000">
    <property type="term" value="P:symbiont genome ejection through host cell envelope, contractile tail mechanism"/>
    <property type="evidence" value="ECO:0007669"/>
    <property type="project" value="UniProtKB-KW"/>
</dbReference>
<dbReference type="Gene3D" id="3.40.50.11780">
    <property type="match status" value="2"/>
</dbReference>
<dbReference type="InterPro" id="IPR052042">
    <property type="entry name" value="Phage_Tail_Sheath_Structural"/>
</dbReference>
<dbReference type="InterPro" id="IPR020287">
    <property type="entry name" value="Tail_sheath_C"/>
</dbReference>
<dbReference type="PANTHER" id="PTHR35861">
    <property type="match status" value="1"/>
</dbReference>
<dbReference type="PANTHER" id="PTHR35861:SF2">
    <property type="entry name" value="FELS-2 PROPHAGE PROTEIN"/>
    <property type="match status" value="1"/>
</dbReference>
<dbReference type="Pfam" id="PF17482">
    <property type="entry name" value="Phage_sheath_1C"/>
    <property type="match status" value="1"/>
</dbReference>
<name>TSP_BPSAV</name>
<feature type="chain" id="PRO_0000432778" description="Tail sheath protein">
    <location>
        <begin position="1"/>
        <end position="631"/>
    </location>
</feature>
<evidence type="ECO:0000250" key="1">
    <source>
        <dbReference type="UniProtKB" id="P79678"/>
    </source>
</evidence>
<evidence type="ECO:0000305" key="2"/>
<evidence type="ECO:0000312" key="3">
    <source>
        <dbReference type="EMBL" id="CBW38028.1"/>
    </source>
</evidence>
<evidence type="ECO:0000312" key="4">
    <source>
        <dbReference type="Proteomes" id="UP000000339"/>
    </source>
</evidence>